<organism>
    <name type="scientific">Pisum sativum</name>
    <name type="common">Garden pea</name>
    <name type="synonym">Lathyrus oleraceus</name>
    <dbReference type="NCBI Taxonomy" id="3888"/>
    <lineage>
        <taxon>Eukaryota</taxon>
        <taxon>Viridiplantae</taxon>
        <taxon>Streptophyta</taxon>
        <taxon>Embryophyta</taxon>
        <taxon>Tracheophyta</taxon>
        <taxon>Spermatophyta</taxon>
        <taxon>Magnoliopsida</taxon>
        <taxon>eudicotyledons</taxon>
        <taxon>Gunneridae</taxon>
        <taxon>Pentapetalae</taxon>
        <taxon>rosids</taxon>
        <taxon>fabids</taxon>
        <taxon>Fabales</taxon>
        <taxon>Fabaceae</taxon>
        <taxon>Papilionoideae</taxon>
        <taxon>50 kb inversion clade</taxon>
        <taxon>NPAAA clade</taxon>
        <taxon>Hologalegina</taxon>
        <taxon>IRL clade</taxon>
        <taxon>Fabeae</taxon>
        <taxon>Pisum</taxon>
    </lineage>
</organism>
<accession>P16270</accession>
<dbReference type="EMBL" id="L11745">
    <property type="protein sequence ID" value="AAA33675.1"/>
    <property type="molecule type" value="Genomic_DNA"/>
</dbReference>
<dbReference type="EMBL" id="M25072">
    <property type="protein sequence ID" value="AAA33681.1"/>
    <property type="molecule type" value="mRNA"/>
</dbReference>
<dbReference type="RefSeq" id="XP_050892724.1">
    <property type="nucleotide sequence ID" value="XM_051036767.1"/>
</dbReference>
<dbReference type="RefSeq" id="XP_050892725.1">
    <property type="nucleotide sequence ID" value="XM_051036768.1"/>
</dbReference>
<dbReference type="RefSeq" id="XP_050892726.1">
    <property type="nucleotide sequence ID" value="XM_051036769.1"/>
</dbReference>
<dbReference type="RefSeq" id="XP_050892728.1">
    <property type="nucleotide sequence ID" value="XM_051036771.1"/>
</dbReference>
<dbReference type="SMR" id="P16270"/>
<dbReference type="GeneID" id="127098229"/>
<dbReference type="GeneID" id="127098230"/>
<dbReference type="GeneID" id="127098231"/>
<dbReference type="GeneID" id="127098232"/>
<dbReference type="OrthoDB" id="1389823at2759"/>
<dbReference type="GO" id="GO:0030246">
    <property type="term" value="F:carbohydrate binding"/>
    <property type="evidence" value="ECO:0007669"/>
    <property type="project" value="UniProtKB-KW"/>
</dbReference>
<dbReference type="CDD" id="cd06899">
    <property type="entry name" value="lectin_legume_LecRK_Arcelin_ConA"/>
    <property type="match status" value="1"/>
</dbReference>
<dbReference type="Gene3D" id="2.60.120.200">
    <property type="match status" value="1"/>
</dbReference>
<dbReference type="InterPro" id="IPR013320">
    <property type="entry name" value="ConA-like_dom_sf"/>
</dbReference>
<dbReference type="InterPro" id="IPR016363">
    <property type="entry name" value="L-lectin"/>
</dbReference>
<dbReference type="InterPro" id="IPR001220">
    <property type="entry name" value="Legume_lectin_dom"/>
</dbReference>
<dbReference type="InterPro" id="IPR050258">
    <property type="entry name" value="Leguminous_Lectin"/>
</dbReference>
<dbReference type="PANTHER" id="PTHR32401">
    <property type="entry name" value="CONCANAVALIN A-LIKE LECTIN FAMILY PROTEIN"/>
    <property type="match status" value="1"/>
</dbReference>
<dbReference type="PANTHER" id="PTHR32401:SF49">
    <property type="entry name" value="OS10G0129200 PROTEIN"/>
    <property type="match status" value="1"/>
</dbReference>
<dbReference type="Pfam" id="PF00139">
    <property type="entry name" value="Lectin_legB"/>
    <property type="match status" value="1"/>
</dbReference>
<dbReference type="PIRSF" id="PIRSF002690">
    <property type="entry name" value="L-type_lectin_plant"/>
    <property type="match status" value="1"/>
</dbReference>
<dbReference type="SUPFAM" id="SSF49899">
    <property type="entry name" value="Concanavalin A-like lectins/glucanases"/>
    <property type="match status" value="1"/>
</dbReference>
<feature type="signal peptide" description="Or 23" evidence="1">
    <location>
        <begin position="1"/>
        <end position="21"/>
    </location>
</feature>
<feature type="chain" id="PRO_0000017625" description="Non-seed lectin">
    <location>
        <begin position="22"/>
        <end position="265"/>
    </location>
</feature>
<feature type="glycosylation site" description="N-linked (GlcNAc...) asparagine" evidence="1">
    <location>
        <position position="59"/>
    </location>
</feature>
<feature type="glycosylation site" description="N-linked (GlcNAc...) asparagine" evidence="1">
    <location>
        <position position="127"/>
    </location>
</feature>
<comment type="subunit">
    <text>Monomer.</text>
</comment>
<comment type="tissue specificity">
    <text>Most highly expressed in the epidermal layer of developing shoot tips.</text>
</comment>
<comment type="similarity">
    <text evidence="2">Belongs to the leguminous lectin family.</text>
</comment>
<name>LECN_PEA</name>
<reference key="1">
    <citation type="journal article" date="1992" name="Plant Mol. Biol.">
        <title>Predicted sequence and structure of a vegetative lectin in Pisum sativum.</title>
        <authorList>
            <person name="Pak J.H."/>
            <person name="Hendrickson T."/>
            <person name="Dobres M.S."/>
        </authorList>
    </citation>
    <scope>NUCLEOTIDE SEQUENCE</scope>
    <source>
        <strain>cv. Alaska</strain>
    </source>
</reference>
<reference key="2">
    <citation type="journal article" date="1989" name="Plant Physiol.">
        <title>A developmentally regulated bud specific transcript in pea has sequence similarity to seed lectins.</title>
        <authorList>
            <person name="Dobres M.S."/>
            <person name="Thompson W.F."/>
        </authorList>
    </citation>
    <scope>NUCLEOTIDE SEQUENCE OF 131-202</scope>
    <source>
        <strain>cv. Alaska</strain>
    </source>
</reference>
<proteinExistence type="evidence at transcript level"/>
<protein>
    <recommendedName>
        <fullName>Non-seed lectin</fullName>
    </recommendedName>
</protein>
<keyword id="KW-0106">Calcium</keyword>
<keyword id="KW-0325">Glycoprotein</keyword>
<keyword id="KW-0430">Lectin</keyword>
<keyword id="KW-0464">Manganese</keyword>
<keyword id="KW-0732">Signal</keyword>
<evidence type="ECO:0000255" key="1"/>
<evidence type="ECO:0000305" key="2"/>
<sequence>MALYRTKELVSLVSIMFVLLATNIEALSFNFPKITPGNTAITLQGNAKILANGVLALTNSTQIPPTTTFPSTGRALYSTPVPLWDSATGNVASFVTSFSFVILNPSGRVPTDGLVFFIAPPDTEIPNNSQSQYLGVVDSKTSINRFVGLEFDLYANSFDPYMRHIGIDINSLISTKTVRYNFVSGSLTKVTIIYDSPSNTLTAVITYENGQISTISQNVDLKAVLPKDVSVGFSATSTIAVSHNIHSWSFTSNLEATTGNIVSQV</sequence>